<gene>
    <name evidence="1 5" type="primary">ldh</name>
    <name type="ordered locus">TM_1867</name>
</gene>
<protein>
    <recommendedName>
        <fullName evidence="1 4">L-lactate dehydrogenase</fullName>
        <shortName evidence="1 4">L-LDH</shortName>
        <ecNumber evidence="1 2">1.1.1.27</ecNumber>
    </recommendedName>
</protein>
<organism>
    <name type="scientific">Thermotoga maritima (strain ATCC 43589 / DSM 3109 / JCM 10099 / NBRC 100826 / MSB8)</name>
    <dbReference type="NCBI Taxonomy" id="243274"/>
    <lineage>
        <taxon>Bacteria</taxon>
        <taxon>Thermotogati</taxon>
        <taxon>Thermotogota</taxon>
        <taxon>Thermotogae</taxon>
        <taxon>Thermotogales</taxon>
        <taxon>Thermotogaceae</taxon>
        <taxon>Thermotoga</taxon>
    </lineage>
</organism>
<feature type="chain" id="PRO_0000168406" description="L-lactate dehydrogenase">
    <location>
        <begin position="1"/>
        <end position="319"/>
    </location>
</feature>
<feature type="active site" description="Proton acceptor" evidence="1 7">
    <location>
        <position position="172"/>
    </location>
</feature>
<feature type="binding site" evidence="3 8">
    <location>
        <begin position="10"/>
        <end position="11"/>
    </location>
    <ligand>
        <name>NAD(+)</name>
        <dbReference type="ChEBI" id="CHEBI:57540"/>
    </ligand>
</feature>
<feature type="binding site" evidence="1 3 8">
    <location>
        <position position="32"/>
    </location>
    <ligand>
        <name>NAD(+)</name>
        <dbReference type="ChEBI" id="CHEBI:57540"/>
    </ligand>
</feature>
<feature type="binding site" evidence="1">
    <location>
        <position position="37"/>
    </location>
    <ligand>
        <name>NAD(+)</name>
        <dbReference type="ChEBI" id="CHEBI:57540"/>
    </ligand>
</feature>
<feature type="binding site" evidence="1">
    <location>
        <position position="62"/>
    </location>
    <ligand>
        <name>NAD(+)</name>
        <dbReference type="ChEBI" id="CHEBI:57540"/>
    </ligand>
</feature>
<feature type="binding site" evidence="1">
    <location>
        <begin position="76"/>
        <end position="77"/>
    </location>
    <ligand>
        <name>NAD(+)</name>
        <dbReference type="ChEBI" id="CHEBI:57540"/>
    </ligand>
</feature>
<feature type="binding site" evidence="1">
    <location>
        <position position="79"/>
    </location>
    <ligand>
        <name>substrate</name>
    </ligand>
</feature>
<feature type="binding site" evidence="1">
    <location>
        <position position="85"/>
    </location>
    <ligand>
        <name>substrate</name>
    </ligand>
</feature>
<feature type="binding site" evidence="1">
    <location>
        <begin position="115"/>
        <end position="117"/>
    </location>
    <ligand>
        <name>NAD(+)</name>
        <dbReference type="ChEBI" id="CHEBI:57540"/>
    </ligand>
</feature>
<feature type="binding site" evidence="1">
    <location>
        <begin position="117"/>
        <end position="120"/>
    </location>
    <ligand>
        <name>substrate</name>
    </ligand>
</feature>
<feature type="binding site" evidence="1">
    <location>
        <position position="140"/>
    </location>
    <ligand>
        <name>NAD(+)</name>
        <dbReference type="ChEBI" id="CHEBI:57540"/>
    </ligand>
</feature>
<feature type="binding site" evidence="1">
    <location>
        <begin position="145"/>
        <end position="148"/>
    </location>
    <ligand>
        <name>substrate</name>
    </ligand>
</feature>
<feature type="binding site" evidence="1">
    <location>
        <position position="150"/>
    </location>
    <ligand>
        <name>beta-D-fructose 1,6-bisphosphate</name>
        <dbReference type="ChEBI" id="CHEBI:32966"/>
        <note>allosteric activator</note>
    </ligand>
</feature>
<feature type="binding site" evidence="1 3 8">
    <location>
        <position position="165"/>
    </location>
    <ligand>
        <name>beta-D-fructose 1,6-bisphosphate</name>
        <dbReference type="ChEBI" id="CHEBI:32966"/>
        <note>allosteric activator</note>
    </ligand>
</feature>
<feature type="binding site" evidence="1">
    <location>
        <position position="226"/>
    </location>
    <ligand>
        <name>substrate</name>
    </ligand>
</feature>
<feature type="modified residue" description="Phosphotyrosine" evidence="1">
    <location>
        <position position="217"/>
    </location>
</feature>
<feature type="sequence conflict" description="In Ref. 3; AA sequence." evidence="6" ref="3">
    <location>
        <position position="14"/>
    </location>
</feature>
<feature type="strand" evidence="9">
    <location>
        <begin position="2"/>
        <end position="6"/>
    </location>
</feature>
<feature type="helix" evidence="9">
    <location>
        <begin position="10"/>
        <end position="22"/>
    </location>
</feature>
<feature type="strand" evidence="9">
    <location>
        <begin position="26"/>
        <end position="31"/>
    </location>
</feature>
<feature type="helix" evidence="9">
    <location>
        <begin position="35"/>
        <end position="48"/>
    </location>
</feature>
<feature type="helix" evidence="9">
    <location>
        <begin position="49"/>
        <end position="51"/>
    </location>
</feature>
<feature type="strand" evidence="9">
    <location>
        <begin position="56"/>
        <end position="59"/>
    </location>
</feature>
<feature type="helix" evidence="9">
    <location>
        <begin position="62"/>
        <end position="65"/>
    </location>
</feature>
<feature type="strand" evidence="9">
    <location>
        <begin position="69"/>
        <end position="73"/>
    </location>
</feature>
<feature type="helix" evidence="9">
    <location>
        <begin position="85"/>
        <end position="106"/>
    </location>
</feature>
<feature type="strand" evidence="9">
    <location>
        <begin position="111"/>
        <end position="114"/>
    </location>
</feature>
<feature type="strand" evidence="9">
    <location>
        <begin position="116"/>
        <end position="118"/>
    </location>
</feature>
<feature type="helix" evidence="9">
    <location>
        <begin position="119"/>
        <end position="130"/>
    </location>
</feature>
<feature type="turn" evidence="9">
    <location>
        <begin position="134"/>
        <end position="136"/>
    </location>
</feature>
<feature type="strand" evidence="9">
    <location>
        <begin position="137"/>
        <end position="139"/>
    </location>
</feature>
<feature type="helix" evidence="9">
    <location>
        <begin position="143"/>
        <end position="157"/>
    </location>
</feature>
<feature type="helix" evidence="9">
    <location>
        <begin position="161"/>
        <end position="163"/>
    </location>
</feature>
<feature type="strand" evidence="9">
    <location>
        <begin position="168"/>
        <end position="170"/>
    </location>
</feature>
<feature type="helix" evidence="9">
    <location>
        <begin position="180"/>
        <end position="182"/>
    </location>
</feature>
<feature type="helix" evidence="9">
    <location>
        <begin position="190"/>
        <end position="194"/>
    </location>
</feature>
<feature type="strand" evidence="9">
    <location>
        <begin position="197"/>
        <end position="199"/>
    </location>
</feature>
<feature type="helix" evidence="9">
    <location>
        <begin position="202"/>
        <end position="223"/>
    </location>
</feature>
<feature type="helix" evidence="9">
    <location>
        <begin position="228"/>
        <end position="242"/>
    </location>
</feature>
<feature type="strand" evidence="9">
    <location>
        <begin position="247"/>
        <end position="258"/>
    </location>
</feature>
<feature type="strand" evidence="9">
    <location>
        <begin position="263"/>
        <end position="273"/>
    </location>
</feature>
<feature type="strand" evidence="9">
    <location>
        <begin position="276"/>
        <end position="280"/>
    </location>
</feature>
<feature type="helix" evidence="9">
    <location>
        <begin position="287"/>
        <end position="308"/>
    </location>
</feature>
<proteinExistence type="evidence at protein level"/>
<evidence type="ECO:0000255" key="1">
    <source>
        <dbReference type="HAMAP-Rule" id="MF_00488"/>
    </source>
</evidence>
<evidence type="ECO:0000269" key="2">
    <source>
    </source>
</evidence>
<evidence type="ECO:0000269" key="3">
    <source>
    </source>
</evidence>
<evidence type="ECO:0000303" key="4">
    <source>
    </source>
</evidence>
<evidence type="ECO:0000303" key="5">
    <source>
    </source>
</evidence>
<evidence type="ECO:0000305" key="6"/>
<evidence type="ECO:0000305" key="7">
    <source>
    </source>
</evidence>
<evidence type="ECO:0007744" key="8">
    <source>
        <dbReference type="PDB" id="1A5Z"/>
    </source>
</evidence>
<evidence type="ECO:0007829" key="9">
    <source>
        <dbReference type="PDB" id="1A5Z"/>
    </source>
</evidence>
<sequence>MKIGIVGLGRVGSSTAFALLMKGFAREMVLIDVDKKRAEGDALDLIHGTPFTRRANIYAGDYADLKGSDVVIVAAGVPQKPGETRLQLLGRNARVMKEIARNVSKYAPDSIVIVVTNPVDVLTYFFLKESGMDPRKVFGSGTVLDTARLRTLIAQHCGFSPRSVHVYVIGEHGDSEVPVWSGAMIGGIPLQNMCQICQKCDSKILENFAEKTKRAAYEIIERKGATHYAIALAVADIVESIFFDEKRVLTLSVYLEDYLGVKDLCISVPVTLGKHGVERILELNLNEEELEAFRKSASILKNAINEITAEENKHQNTSG</sequence>
<keyword id="KW-0002">3D-structure</keyword>
<keyword id="KW-0021">Allosteric enzyme</keyword>
<keyword id="KW-0963">Cytoplasm</keyword>
<keyword id="KW-0903">Direct protein sequencing</keyword>
<keyword id="KW-0520">NAD</keyword>
<keyword id="KW-0560">Oxidoreductase</keyword>
<keyword id="KW-0597">Phosphoprotein</keyword>
<keyword id="KW-1185">Reference proteome</keyword>
<name>LDH_THEMA</name>
<accession>P16115</accession>
<dbReference type="EC" id="1.1.1.27" evidence="1 2"/>
<dbReference type="EMBL" id="X74302">
    <property type="protein sequence ID" value="CAA52355.1"/>
    <property type="molecule type" value="Genomic_DNA"/>
</dbReference>
<dbReference type="EMBL" id="AE000512">
    <property type="protein sequence ID" value="AAD36929.1"/>
    <property type="molecule type" value="Genomic_DNA"/>
</dbReference>
<dbReference type="PIR" id="S36863">
    <property type="entry name" value="S36863"/>
</dbReference>
<dbReference type="RefSeq" id="NP_229663.1">
    <property type="nucleotide sequence ID" value="NC_000853.1"/>
</dbReference>
<dbReference type="RefSeq" id="WP_004082418.1">
    <property type="nucleotide sequence ID" value="NZ_CP011107.1"/>
</dbReference>
<dbReference type="PDB" id="1A5Z">
    <property type="method" value="X-ray"/>
    <property type="resolution" value="2.10 A"/>
    <property type="chains" value="A=1-319"/>
</dbReference>
<dbReference type="PDBsum" id="1A5Z"/>
<dbReference type="SMR" id="P16115"/>
<dbReference type="FunCoup" id="P16115">
    <property type="interactions" value="144"/>
</dbReference>
<dbReference type="STRING" id="243274.TM_1867"/>
<dbReference type="DrugBank" id="DB03940">
    <property type="generic name" value="Oxamic Acid"/>
</dbReference>
<dbReference type="PaxDb" id="243274-THEMA_04835"/>
<dbReference type="EnsemblBacteria" id="AAD36929">
    <property type="protein sequence ID" value="AAD36929"/>
    <property type="gene ID" value="TM_1867"/>
</dbReference>
<dbReference type="KEGG" id="tma:TM1867"/>
<dbReference type="KEGG" id="tmi:THEMA_04835"/>
<dbReference type="KEGG" id="tmm:Tmari_1882"/>
<dbReference type="KEGG" id="tmw:THMA_1917"/>
<dbReference type="eggNOG" id="COG0039">
    <property type="taxonomic scope" value="Bacteria"/>
</dbReference>
<dbReference type="InParanoid" id="P16115"/>
<dbReference type="OrthoDB" id="9802969at2"/>
<dbReference type="UniPathway" id="UPA00554">
    <property type="reaction ID" value="UER00611"/>
</dbReference>
<dbReference type="EvolutionaryTrace" id="P16115"/>
<dbReference type="Proteomes" id="UP000008183">
    <property type="component" value="Chromosome"/>
</dbReference>
<dbReference type="GO" id="GO:0005737">
    <property type="term" value="C:cytoplasm"/>
    <property type="evidence" value="ECO:0007669"/>
    <property type="project" value="UniProtKB-SubCell"/>
</dbReference>
<dbReference type="GO" id="GO:0004459">
    <property type="term" value="F:L-lactate dehydrogenase activity"/>
    <property type="evidence" value="ECO:0000318"/>
    <property type="project" value="GO_Central"/>
</dbReference>
<dbReference type="GO" id="GO:0006096">
    <property type="term" value="P:glycolytic process"/>
    <property type="evidence" value="ECO:0007669"/>
    <property type="project" value="UniProtKB-UniRule"/>
</dbReference>
<dbReference type="GO" id="GO:0006089">
    <property type="term" value="P:lactate metabolic process"/>
    <property type="evidence" value="ECO:0000318"/>
    <property type="project" value="GO_Central"/>
</dbReference>
<dbReference type="GO" id="GO:0006090">
    <property type="term" value="P:pyruvate metabolic process"/>
    <property type="evidence" value="ECO:0000318"/>
    <property type="project" value="GO_Central"/>
</dbReference>
<dbReference type="CDD" id="cd05292">
    <property type="entry name" value="LDH_2"/>
    <property type="match status" value="1"/>
</dbReference>
<dbReference type="FunFam" id="3.40.50.720:FF:000018">
    <property type="entry name" value="Malate dehydrogenase"/>
    <property type="match status" value="1"/>
</dbReference>
<dbReference type="Gene3D" id="3.90.110.10">
    <property type="entry name" value="Lactate dehydrogenase/glycoside hydrolase, family 4, C-terminal"/>
    <property type="match status" value="1"/>
</dbReference>
<dbReference type="Gene3D" id="3.40.50.720">
    <property type="entry name" value="NAD(P)-binding Rossmann-like Domain"/>
    <property type="match status" value="1"/>
</dbReference>
<dbReference type="HAMAP" id="MF_00488">
    <property type="entry name" value="Lactate_dehydrog"/>
    <property type="match status" value="1"/>
</dbReference>
<dbReference type="InterPro" id="IPR001557">
    <property type="entry name" value="L-lactate/malate_DH"/>
</dbReference>
<dbReference type="InterPro" id="IPR011304">
    <property type="entry name" value="L-lactate_DH"/>
</dbReference>
<dbReference type="InterPro" id="IPR018177">
    <property type="entry name" value="L-lactate_DH_AS"/>
</dbReference>
<dbReference type="InterPro" id="IPR022383">
    <property type="entry name" value="Lactate/malate_DH_C"/>
</dbReference>
<dbReference type="InterPro" id="IPR001236">
    <property type="entry name" value="Lactate/malate_DH_N"/>
</dbReference>
<dbReference type="InterPro" id="IPR015955">
    <property type="entry name" value="Lactate_DH/Glyco_Ohase_4_C"/>
</dbReference>
<dbReference type="InterPro" id="IPR036291">
    <property type="entry name" value="NAD(P)-bd_dom_sf"/>
</dbReference>
<dbReference type="NCBIfam" id="TIGR01771">
    <property type="entry name" value="L-LDH-NAD"/>
    <property type="match status" value="1"/>
</dbReference>
<dbReference type="NCBIfam" id="NF000824">
    <property type="entry name" value="PRK00066.1"/>
    <property type="match status" value="1"/>
</dbReference>
<dbReference type="NCBIfam" id="NF004863">
    <property type="entry name" value="PRK06223.1"/>
    <property type="match status" value="1"/>
</dbReference>
<dbReference type="PANTHER" id="PTHR43128">
    <property type="entry name" value="L-2-HYDROXYCARBOXYLATE DEHYDROGENASE (NAD(P)(+))"/>
    <property type="match status" value="1"/>
</dbReference>
<dbReference type="PANTHER" id="PTHR43128:SF16">
    <property type="entry name" value="L-LACTATE DEHYDROGENASE"/>
    <property type="match status" value="1"/>
</dbReference>
<dbReference type="Pfam" id="PF02866">
    <property type="entry name" value="Ldh_1_C"/>
    <property type="match status" value="1"/>
</dbReference>
<dbReference type="Pfam" id="PF00056">
    <property type="entry name" value="Ldh_1_N"/>
    <property type="match status" value="1"/>
</dbReference>
<dbReference type="PIRSF" id="PIRSF000102">
    <property type="entry name" value="Lac_mal_DH"/>
    <property type="match status" value="1"/>
</dbReference>
<dbReference type="PRINTS" id="PR00086">
    <property type="entry name" value="LLDHDRGNASE"/>
</dbReference>
<dbReference type="SUPFAM" id="SSF56327">
    <property type="entry name" value="LDH C-terminal domain-like"/>
    <property type="match status" value="1"/>
</dbReference>
<dbReference type="SUPFAM" id="SSF51735">
    <property type="entry name" value="NAD(P)-binding Rossmann-fold domains"/>
    <property type="match status" value="1"/>
</dbReference>
<dbReference type="PROSITE" id="PS00064">
    <property type="entry name" value="L_LDH"/>
    <property type="match status" value="1"/>
</dbReference>
<comment type="function">
    <text evidence="1 2">Catalyzes the conversion of lactate to pyruvate. It is stereospecific for L(+)-lactate.</text>
</comment>
<comment type="catalytic activity">
    <reaction evidence="1 2">
        <text>(S)-lactate + NAD(+) = pyruvate + NADH + H(+)</text>
        <dbReference type="Rhea" id="RHEA:23444"/>
        <dbReference type="ChEBI" id="CHEBI:15361"/>
        <dbReference type="ChEBI" id="CHEBI:15378"/>
        <dbReference type="ChEBI" id="CHEBI:16651"/>
        <dbReference type="ChEBI" id="CHEBI:57540"/>
        <dbReference type="ChEBI" id="CHEBI:57945"/>
        <dbReference type="EC" id="1.1.1.27"/>
    </reaction>
</comment>
<comment type="activity regulation">
    <text evidence="2">Allosterically activated by fructose 1,6-bisphosphate (FBP). Inactivated by Mn(2+), Co(2+), Cd(2+) and Zn(2+).</text>
</comment>
<comment type="biophysicochemical properties">
    <kinetics>
        <KM evidence="2">30 uM for NADH (at 55 degrees Celsius and in the absence of fructose 1,6-bisphosphate (FBP))</KM>
        <KM evidence="2">60 uM for pyruvate (at 55 degrees Celsius and in the presence of fructose 1,6-bisphosphate (FBP))</KM>
        <KM evidence="2">90 uM for NAD(+) (at 55 degrees Celsius and in the absence of fructose 1,6-bisphosphate (FBP))</KM>
        <KM evidence="2">3.7 mM for pyruvate (at 55 degrees Celsius and in the absence of fructose 1,6-bisphosphate (FBP))</KM>
        <KM evidence="2">25 mM for L(+)-lactate (at 55 degrees Celsius and in the presence of fructose 1,6-bisphosphate (FBP))</KM>
        <KM evidence="2">410 mM for L(+)-lactate (at 55 degrees Celsius and in the absence of fructose 1,6-bisphosphate (FBP))</KM>
    </kinetics>
    <phDependence>
        <text evidence="2">Optimum pH is 7.</text>
    </phDependence>
    <temperatureDependence>
        <text evidence="2">Long-term stability up to 80 degrees Celsius. Fructose 1,6-bisphosphate (FBP) increases the thermal stability at 90 degrees Celsius (pH 6.0).</text>
    </temperatureDependence>
</comment>
<comment type="pathway">
    <text evidence="1">Fermentation; pyruvate fermentation to lactate; (S)-lactate from pyruvate: step 1/1.</text>
</comment>
<comment type="subunit">
    <text evidence="1 2 3">Homotetramer.</text>
</comment>
<comment type="subcellular location">
    <subcellularLocation>
        <location evidence="1">Cytoplasm</location>
    </subcellularLocation>
</comment>
<comment type="similarity">
    <text evidence="1 6">Belongs to the LDH/MDH superfamily. LDH family.</text>
</comment>
<reference key="1">
    <citation type="journal article" date="1993" name="Eur. J. Biochem.">
        <title>The L-lactate dehydrogenase gene of the hyperthermophilic bacterium Thermotoga maritima cloned by complementation in Escherichia coli.</title>
        <authorList>
            <person name="Ostendorp R."/>
            <person name="Liebl W."/>
            <person name="Schurig H."/>
            <person name="Jaenicke R."/>
        </authorList>
    </citation>
    <scope>NUCLEOTIDE SEQUENCE [GENOMIC DNA]</scope>
    <source>
        <strain>ATCC 43589 / DSM 3109 / JCM 10099 / NBRC 100826 / MSB8</strain>
    </source>
</reference>
<reference key="2">
    <citation type="journal article" date="1999" name="Nature">
        <title>Evidence for lateral gene transfer between Archaea and Bacteria from genome sequence of Thermotoga maritima.</title>
        <authorList>
            <person name="Nelson K.E."/>
            <person name="Clayton R.A."/>
            <person name="Gill S.R."/>
            <person name="Gwinn M.L."/>
            <person name="Dodson R.J."/>
            <person name="Haft D.H."/>
            <person name="Hickey E.K."/>
            <person name="Peterson J.D."/>
            <person name="Nelson W.C."/>
            <person name="Ketchum K.A."/>
            <person name="McDonald L.A."/>
            <person name="Utterback T.R."/>
            <person name="Malek J.A."/>
            <person name="Linher K.D."/>
            <person name="Garrett M.M."/>
            <person name="Stewart A.M."/>
            <person name="Cotton M.D."/>
            <person name="Pratt M.S."/>
            <person name="Phillips C.A."/>
            <person name="Richardson D.L."/>
            <person name="Heidelberg J.F."/>
            <person name="Sutton G.G."/>
            <person name="Fleischmann R.D."/>
            <person name="Eisen J.A."/>
            <person name="White O."/>
            <person name="Salzberg S.L."/>
            <person name="Smith H.O."/>
            <person name="Venter J.C."/>
            <person name="Fraser C.M."/>
        </authorList>
    </citation>
    <scope>NUCLEOTIDE SEQUENCE [LARGE SCALE GENOMIC DNA]</scope>
    <source>
        <strain>ATCC 43589 / DSM 3109 / JCM 10099 / NBRC 100826 / MSB8</strain>
    </source>
</reference>
<reference key="3">
    <citation type="journal article" date="1990" name="Eur. J. Biochem.">
        <title>Lactate dehydrogenase from the extreme thermophile Thermotoga maritima.</title>
        <authorList>
            <person name="Wrba A."/>
            <person name="Jaenicke R."/>
            <person name="Huber R."/>
            <person name="Stetter K.O."/>
        </authorList>
    </citation>
    <scope>PROTEIN SEQUENCE OF 1-31</scope>
    <scope>FUNCTION</scope>
    <scope>CATALYTIC ACTIVITY</scope>
    <scope>BIOPHYSICOCHEMICAL PROPERTIES</scope>
    <scope>ACTIVITY REGULATION</scope>
    <scope>SUBUNIT</scope>
    <scope>SUBSTRATE SPECIFICITY</scope>
    <source>
        <strain>ATCC 43589 / DSM 3109 / JCM 10099 / NBRC 100826 / MSB8</strain>
    </source>
</reference>
<reference key="4">
    <citation type="journal article" date="1998" name="Structure">
        <title>Lactate dehydrogenase from the hyperthermophilic bacterium Thermotoga maritima: the crystal structure at 2.1-A resolution reveals strategies for intrinsic protein stabilization.</title>
        <authorList>
            <person name="Auerbach G."/>
            <person name="Ostendorp R."/>
            <person name="Prade L."/>
            <person name="Korndorfer I."/>
            <person name="Dams T."/>
            <person name="Huber R."/>
            <person name="Jaenicke R."/>
        </authorList>
    </citation>
    <scope>X-RAY CRYSTALLOGRAPHY (2.1 ANGSTROMS) IN COMPLEX WITH NAD AND FRUCTOSE 1,6-BISPHOSPHATE</scope>
    <scope>ACTIVE SITE</scope>
    <scope>SUBUNIT</scope>
</reference>